<name>RL16_LEUMM</name>
<keyword id="KW-1185">Reference proteome</keyword>
<keyword id="KW-0687">Ribonucleoprotein</keyword>
<keyword id="KW-0689">Ribosomal protein</keyword>
<keyword id="KW-0694">RNA-binding</keyword>
<keyword id="KW-0699">rRNA-binding</keyword>
<keyword id="KW-0820">tRNA-binding</keyword>
<dbReference type="EMBL" id="CP000414">
    <property type="protein sequence ID" value="ABJ61334.1"/>
    <property type="molecule type" value="Genomic_DNA"/>
</dbReference>
<dbReference type="RefSeq" id="WP_002816029.1">
    <property type="nucleotide sequence ID" value="NC_008531.1"/>
</dbReference>
<dbReference type="SMR" id="Q03ZN8"/>
<dbReference type="EnsemblBacteria" id="ABJ61334">
    <property type="protein sequence ID" value="ABJ61334"/>
    <property type="gene ID" value="LEUM_0203"/>
</dbReference>
<dbReference type="GeneID" id="97504974"/>
<dbReference type="KEGG" id="lme:LEUM_0203"/>
<dbReference type="eggNOG" id="COG0197">
    <property type="taxonomic scope" value="Bacteria"/>
</dbReference>
<dbReference type="HOGENOM" id="CLU_078858_2_1_9"/>
<dbReference type="Proteomes" id="UP000000362">
    <property type="component" value="Chromosome"/>
</dbReference>
<dbReference type="GO" id="GO:0022625">
    <property type="term" value="C:cytosolic large ribosomal subunit"/>
    <property type="evidence" value="ECO:0007669"/>
    <property type="project" value="TreeGrafter"/>
</dbReference>
<dbReference type="GO" id="GO:0019843">
    <property type="term" value="F:rRNA binding"/>
    <property type="evidence" value="ECO:0007669"/>
    <property type="project" value="UniProtKB-UniRule"/>
</dbReference>
<dbReference type="GO" id="GO:0003735">
    <property type="term" value="F:structural constituent of ribosome"/>
    <property type="evidence" value="ECO:0007669"/>
    <property type="project" value="InterPro"/>
</dbReference>
<dbReference type="GO" id="GO:0000049">
    <property type="term" value="F:tRNA binding"/>
    <property type="evidence" value="ECO:0007669"/>
    <property type="project" value="UniProtKB-KW"/>
</dbReference>
<dbReference type="GO" id="GO:0006412">
    <property type="term" value="P:translation"/>
    <property type="evidence" value="ECO:0007669"/>
    <property type="project" value="UniProtKB-UniRule"/>
</dbReference>
<dbReference type="CDD" id="cd01433">
    <property type="entry name" value="Ribosomal_L16_L10e"/>
    <property type="match status" value="1"/>
</dbReference>
<dbReference type="FunFam" id="3.90.1170.10:FF:000001">
    <property type="entry name" value="50S ribosomal protein L16"/>
    <property type="match status" value="1"/>
</dbReference>
<dbReference type="Gene3D" id="3.90.1170.10">
    <property type="entry name" value="Ribosomal protein L10e/L16"/>
    <property type="match status" value="1"/>
</dbReference>
<dbReference type="HAMAP" id="MF_01342">
    <property type="entry name" value="Ribosomal_uL16"/>
    <property type="match status" value="1"/>
</dbReference>
<dbReference type="InterPro" id="IPR047873">
    <property type="entry name" value="Ribosomal_uL16"/>
</dbReference>
<dbReference type="InterPro" id="IPR000114">
    <property type="entry name" value="Ribosomal_uL16_bact-type"/>
</dbReference>
<dbReference type="InterPro" id="IPR020798">
    <property type="entry name" value="Ribosomal_uL16_CS"/>
</dbReference>
<dbReference type="InterPro" id="IPR016180">
    <property type="entry name" value="Ribosomal_uL16_dom"/>
</dbReference>
<dbReference type="InterPro" id="IPR036920">
    <property type="entry name" value="Ribosomal_uL16_sf"/>
</dbReference>
<dbReference type="NCBIfam" id="TIGR01164">
    <property type="entry name" value="rplP_bact"/>
    <property type="match status" value="1"/>
</dbReference>
<dbReference type="PANTHER" id="PTHR12220">
    <property type="entry name" value="50S/60S RIBOSOMAL PROTEIN L16"/>
    <property type="match status" value="1"/>
</dbReference>
<dbReference type="PANTHER" id="PTHR12220:SF13">
    <property type="entry name" value="LARGE RIBOSOMAL SUBUNIT PROTEIN UL16M"/>
    <property type="match status" value="1"/>
</dbReference>
<dbReference type="Pfam" id="PF00252">
    <property type="entry name" value="Ribosomal_L16"/>
    <property type="match status" value="1"/>
</dbReference>
<dbReference type="PRINTS" id="PR00060">
    <property type="entry name" value="RIBOSOMALL16"/>
</dbReference>
<dbReference type="SUPFAM" id="SSF54686">
    <property type="entry name" value="Ribosomal protein L16p/L10e"/>
    <property type="match status" value="1"/>
</dbReference>
<dbReference type="PROSITE" id="PS00586">
    <property type="entry name" value="RIBOSOMAL_L16_1"/>
    <property type="match status" value="1"/>
</dbReference>
<dbReference type="PROSITE" id="PS00701">
    <property type="entry name" value="RIBOSOMAL_L16_2"/>
    <property type="match status" value="1"/>
</dbReference>
<sequence>MLVPKRVKFRRVHRGHMRGEAKGGKTVTFGDFGLQATTSSWITNRQIEAARIAMTRYMKRGGKVWIKIFPHKSYTSKGVGVRMGNGKGAPEGWVEPVKRGKVMFEVAGVPEATAREALRLAQHKLPVRTKIIAREAE</sequence>
<protein>
    <recommendedName>
        <fullName evidence="1">Large ribosomal subunit protein uL16</fullName>
    </recommendedName>
    <alternativeName>
        <fullName evidence="2">50S ribosomal protein L16</fullName>
    </alternativeName>
</protein>
<comment type="function">
    <text evidence="1">Binds 23S rRNA and is also seen to make contacts with the A and possibly P site tRNAs.</text>
</comment>
<comment type="subunit">
    <text evidence="1">Part of the 50S ribosomal subunit.</text>
</comment>
<comment type="similarity">
    <text evidence="1">Belongs to the universal ribosomal protein uL16 family.</text>
</comment>
<evidence type="ECO:0000255" key="1">
    <source>
        <dbReference type="HAMAP-Rule" id="MF_01342"/>
    </source>
</evidence>
<evidence type="ECO:0000305" key="2"/>
<organism>
    <name type="scientific">Leuconostoc mesenteroides subsp. mesenteroides (strain ATCC 8293 / DSM 20343 / BCRC 11652 / CCM 1803 / JCM 6124 / NCDO 523 / NBRC 100496 / NCIMB 8023 / NCTC 12954 / NRRL B-1118 / 37Y)</name>
    <dbReference type="NCBI Taxonomy" id="203120"/>
    <lineage>
        <taxon>Bacteria</taxon>
        <taxon>Bacillati</taxon>
        <taxon>Bacillota</taxon>
        <taxon>Bacilli</taxon>
        <taxon>Lactobacillales</taxon>
        <taxon>Lactobacillaceae</taxon>
        <taxon>Leuconostoc</taxon>
    </lineage>
</organism>
<gene>
    <name evidence="1" type="primary">rplP</name>
    <name type="ordered locus">LEUM_0203</name>
</gene>
<reference key="1">
    <citation type="journal article" date="2006" name="Proc. Natl. Acad. Sci. U.S.A.">
        <title>Comparative genomics of the lactic acid bacteria.</title>
        <authorList>
            <person name="Makarova K.S."/>
            <person name="Slesarev A."/>
            <person name="Wolf Y.I."/>
            <person name="Sorokin A."/>
            <person name="Mirkin B."/>
            <person name="Koonin E.V."/>
            <person name="Pavlov A."/>
            <person name="Pavlova N."/>
            <person name="Karamychev V."/>
            <person name="Polouchine N."/>
            <person name="Shakhova V."/>
            <person name="Grigoriev I."/>
            <person name="Lou Y."/>
            <person name="Rohksar D."/>
            <person name="Lucas S."/>
            <person name="Huang K."/>
            <person name="Goodstein D.M."/>
            <person name="Hawkins T."/>
            <person name="Plengvidhya V."/>
            <person name="Welker D."/>
            <person name="Hughes J."/>
            <person name="Goh Y."/>
            <person name="Benson A."/>
            <person name="Baldwin K."/>
            <person name="Lee J.-H."/>
            <person name="Diaz-Muniz I."/>
            <person name="Dosti B."/>
            <person name="Smeianov V."/>
            <person name="Wechter W."/>
            <person name="Barabote R."/>
            <person name="Lorca G."/>
            <person name="Altermann E."/>
            <person name="Barrangou R."/>
            <person name="Ganesan B."/>
            <person name="Xie Y."/>
            <person name="Rawsthorne H."/>
            <person name="Tamir D."/>
            <person name="Parker C."/>
            <person name="Breidt F."/>
            <person name="Broadbent J.R."/>
            <person name="Hutkins R."/>
            <person name="O'Sullivan D."/>
            <person name="Steele J."/>
            <person name="Unlu G."/>
            <person name="Saier M.H. Jr."/>
            <person name="Klaenhammer T."/>
            <person name="Richardson P."/>
            <person name="Kozyavkin S."/>
            <person name="Weimer B.C."/>
            <person name="Mills D.A."/>
        </authorList>
    </citation>
    <scope>NUCLEOTIDE SEQUENCE [LARGE SCALE GENOMIC DNA]</scope>
    <source>
        <strain>ATCC 8293 / DSM 20343 / BCRC 11652 / CCM 1803 / JCM 6124 / NCDO 523 / NBRC 100496 / NCIMB 8023 / NCTC 12954 / NRRL B-1118 / 37Y</strain>
    </source>
</reference>
<accession>Q03ZN8</accession>
<feature type="chain" id="PRO_1000054646" description="Large ribosomal subunit protein uL16">
    <location>
        <begin position="1"/>
        <end position="137"/>
    </location>
</feature>
<proteinExistence type="inferred from homology"/>